<name>USPB_KLEP7</name>
<gene>
    <name evidence="1" type="primary">uspB</name>
    <name type="ordered locus">KPN78578_38220</name>
    <name type="ORF">KPN_03859</name>
</gene>
<sequence>MISTIALFWALCVVCVVNMARYFSSLRALLVVLRGCDPLLYQYVDGGGFFTSHGQPSKQMRLVWYIYAQRYRDHHDDEFIRRCERVRRQFILTSALCGLVVVSLIALMIWH</sequence>
<evidence type="ECO:0000255" key="1">
    <source>
        <dbReference type="HAMAP-Rule" id="MF_01088"/>
    </source>
</evidence>
<reference key="1">
    <citation type="submission" date="2006-09" db="EMBL/GenBank/DDBJ databases">
        <authorList>
            <consortium name="The Klebsiella pneumonia Genome Sequencing Project"/>
            <person name="McClelland M."/>
            <person name="Sanderson E.K."/>
            <person name="Spieth J."/>
            <person name="Clifton W.S."/>
            <person name="Latreille P."/>
            <person name="Sabo A."/>
            <person name="Pepin K."/>
            <person name="Bhonagiri V."/>
            <person name="Porwollik S."/>
            <person name="Ali J."/>
            <person name="Wilson R.K."/>
        </authorList>
    </citation>
    <scope>NUCLEOTIDE SEQUENCE [LARGE SCALE GENOMIC DNA]</scope>
    <source>
        <strain>ATCC 700721 / MGH 78578</strain>
    </source>
</reference>
<feature type="chain" id="PRO_1000064878" description="Universal stress protein B">
    <location>
        <begin position="1"/>
        <end position="111"/>
    </location>
</feature>
<feature type="transmembrane region" description="Helical" evidence="1">
    <location>
        <begin position="1"/>
        <end position="21"/>
    </location>
</feature>
<feature type="transmembrane region" description="Helical" evidence="1">
    <location>
        <begin position="90"/>
        <end position="110"/>
    </location>
</feature>
<proteinExistence type="inferred from homology"/>
<comment type="subcellular location">
    <subcellularLocation>
        <location evidence="1">Cell inner membrane</location>
        <topology evidence="1">Multi-pass membrane protein</topology>
    </subcellularLocation>
</comment>
<comment type="similarity">
    <text evidence="1">Belongs to the universal stress protein B family.</text>
</comment>
<keyword id="KW-0997">Cell inner membrane</keyword>
<keyword id="KW-1003">Cell membrane</keyword>
<keyword id="KW-0472">Membrane</keyword>
<keyword id="KW-0812">Transmembrane</keyword>
<keyword id="KW-1133">Transmembrane helix</keyword>
<accession>A6TFB2</accession>
<dbReference type="EMBL" id="CP000647">
    <property type="protein sequence ID" value="ABR79246.1"/>
    <property type="molecule type" value="Genomic_DNA"/>
</dbReference>
<dbReference type="RefSeq" id="WP_002921203.1">
    <property type="nucleotide sequence ID" value="NC_009648.1"/>
</dbReference>
<dbReference type="STRING" id="272620.KPN_03859"/>
<dbReference type="PaxDb" id="272620-KPN_03859"/>
<dbReference type="DNASU" id="5339262"/>
<dbReference type="EnsemblBacteria" id="ABR79246">
    <property type="protein sequence ID" value="ABR79246"/>
    <property type="gene ID" value="KPN_03859"/>
</dbReference>
<dbReference type="GeneID" id="93270825"/>
<dbReference type="KEGG" id="kpn:KPN_03859"/>
<dbReference type="HOGENOM" id="CLU_151816_0_0_6"/>
<dbReference type="Proteomes" id="UP000000265">
    <property type="component" value="Chromosome"/>
</dbReference>
<dbReference type="GO" id="GO:0005886">
    <property type="term" value="C:plasma membrane"/>
    <property type="evidence" value="ECO:0007669"/>
    <property type="project" value="UniProtKB-SubCell"/>
</dbReference>
<dbReference type="HAMAP" id="MF_01088">
    <property type="entry name" value="UspB"/>
    <property type="match status" value="1"/>
</dbReference>
<dbReference type="InterPro" id="IPR019598">
    <property type="entry name" value="Universal_stress_protein_B"/>
</dbReference>
<dbReference type="NCBIfam" id="NF003435">
    <property type="entry name" value="PRK04960.1"/>
    <property type="match status" value="1"/>
</dbReference>
<dbReference type="Pfam" id="PF10625">
    <property type="entry name" value="UspB"/>
    <property type="match status" value="1"/>
</dbReference>
<organism>
    <name type="scientific">Klebsiella pneumoniae subsp. pneumoniae (strain ATCC 700721 / MGH 78578)</name>
    <dbReference type="NCBI Taxonomy" id="272620"/>
    <lineage>
        <taxon>Bacteria</taxon>
        <taxon>Pseudomonadati</taxon>
        <taxon>Pseudomonadota</taxon>
        <taxon>Gammaproteobacteria</taxon>
        <taxon>Enterobacterales</taxon>
        <taxon>Enterobacteriaceae</taxon>
        <taxon>Klebsiella/Raoultella group</taxon>
        <taxon>Klebsiella</taxon>
        <taxon>Klebsiella pneumoniae complex</taxon>
    </lineage>
</organism>
<protein>
    <recommendedName>
        <fullName evidence="1">Universal stress protein B</fullName>
    </recommendedName>
</protein>